<evidence type="ECO:0000250" key="1"/>
<evidence type="ECO:0000255" key="2">
    <source>
        <dbReference type="PROSITE-ProRule" id="PRU01163"/>
    </source>
</evidence>
<evidence type="ECO:0000305" key="3"/>
<organism>
    <name type="scientific">Tetrahymena thermophila</name>
    <dbReference type="NCBI Taxonomy" id="5911"/>
    <lineage>
        <taxon>Eukaryota</taxon>
        <taxon>Sar</taxon>
        <taxon>Alveolata</taxon>
        <taxon>Ciliophora</taxon>
        <taxon>Intramacronucleata</taxon>
        <taxon>Oligohymenophorea</taxon>
        <taxon>Hymenostomatida</taxon>
        <taxon>Tetrahymenina</taxon>
        <taxon>Tetrahymenidae</taxon>
        <taxon>Tetrahymena</taxon>
    </lineage>
</organism>
<dbReference type="EC" id="1.13.11.27"/>
<dbReference type="EMBL" id="M59429">
    <property type="protein sequence ID" value="AAA96492.1"/>
    <property type="molecule type" value="Genomic_DNA"/>
</dbReference>
<dbReference type="PIR" id="S27339">
    <property type="entry name" value="S27339"/>
</dbReference>
<dbReference type="SMR" id="Q27203"/>
<dbReference type="OMA" id="DPFPVKG"/>
<dbReference type="UniPathway" id="UPA00139">
    <property type="reaction ID" value="UER00362"/>
</dbReference>
<dbReference type="GO" id="GO:0003868">
    <property type="term" value="F:4-hydroxyphenylpyruvate dioxygenase activity"/>
    <property type="evidence" value="ECO:0000250"/>
    <property type="project" value="UniProtKB"/>
</dbReference>
<dbReference type="GO" id="GO:0046872">
    <property type="term" value="F:metal ion binding"/>
    <property type="evidence" value="ECO:0007669"/>
    <property type="project" value="UniProtKB-KW"/>
</dbReference>
<dbReference type="GO" id="GO:0006559">
    <property type="term" value="P:L-phenylalanine catabolic process"/>
    <property type="evidence" value="ECO:0007669"/>
    <property type="project" value="UniProtKB-UniPathway"/>
</dbReference>
<dbReference type="GO" id="GO:0006572">
    <property type="term" value="P:tyrosine catabolic process"/>
    <property type="evidence" value="ECO:0000250"/>
    <property type="project" value="UniProtKB"/>
</dbReference>
<dbReference type="CDD" id="cd07250">
    <property type="entry name" value="HPPD_C_like"/>
    <property type="match status" value="1"/>
</dbReference>
<dbReference type="CDD" id="cd08342">
    <property type="entry name" value="HPPD_N_like"/>
    <property type="match status" value="1"/>
</dbReference>
<dbReference type="FunFam" id="3.10.180.10:FF:000001">
    <property type="entry name" value="4-hydroxyphenylpyruvate dioxygenase"/>
    <property type="match status" value="1"/>
</dbReference>
<dbReference type="FunFam" id="3.10.180.10:FF:000068">
    <property type="entry name" value="4-hydroxyphenylpyruvate dioxygenase"/>
    <property type="match status" value="1"/>
</dbReference>
<dbReference type="Gene3D" id="3.10.180.10">
    <property type="entry name" value="2,3-Dihydroxybiphenyl 1,2-Dioxygenase, domain 1"/>
    <property type="match status" value="2"/>
</dbReference>
<dbReference type="InterPro" id="IPR005956">
    <property type="entry name" value="4OHPhenylPyrv_dOase"/>
</dbReference>
<dbReference type="InterPro" id="IPR041735">
    <property type="entry name" value="4OHPhenylPyrv_dOase_C"/>
</dbReference>
<dbReference type="InterPro" id="IPR041736">
    <property type="entry name" value="4OHPhenylPyrv_dOase_N"/>
</dbReference>
<dbReference type="InterPro" id="IPR029068">
    <property type="entry name" value="Glyas_Bleomycin-R_OHBP_Dase"/>
</dbReference>
<dbReference type="InterPro" id="IPR004360">
    <property type="entry name" value="Glyas_Fos-R_dOase_dom"/>
</dbReference>
<dbReference type="InterPro" id="IPR037523">
    <property type="entry name" value="VOC"/>
</dbReference>
<dbReference type="NCBIfam" id="TIGR01263">
    <property type="entry name" value="4HPPD"/>
    <property type="match status" value="1"/>
</dbReference>
<dbReference type="PANTHER" id="PTHR11959">
    <property type="entry name" value="4-HYDROXYPHENYLPYRUVATE DIOXYGENASE"/>
    <property type="match status" value="1"/>
</dbReference>
<dbReference type="PANTHER" id="PTHR11959:SF1">
    <property type="entry name" value="4-HYDROXYPHENYLPYRUVATE DIOXYGENASE"/>
    <property type="match status" value="1"/>
</dbReference>
<dbReference type="Pfam" id="PF00903">
    <property type="entry name" value="Glyoxalase"/>
    <property type="match status" value="2"/>
</dbReference>
<dbReference type="PIRSF" id="PIRSF009283">
    <property type="entry name" value="HPP_dOase"/>
    <property type="match status" value="1"/>
</dbReference>
<dbReference type="SUPFAM" id="SSF54593">
    <property type="entry name" value="Glyoxalase/Bleomycin resistance protein/Dihydroxybiphenyl dioxygenase"/>
    <property type="match status" value="1"/>
</dbReference>
<dbReference type="PROSITE" id="PS51819">
    <property type="entry name" value="VOC"/>
    <property type="match status" value="2"/>
</dbReference>
<comment type="function">
    <text evidence="1">Key enzyme in the degradation of tyrosine.</text>
</comment>
<comment type="catalytic activity">
    <reaction>
        <text>3-(4-hydroxyphenyl)pyruvate + O2 = homogentisate + CO2</text>
        <dbReference type="Rhea" id="RHEA:16189"/>
        <dbReference type="ChEBI" id="CHEBI:15379"/>
        <dbReference type="ChEBI" id="CHEBI:16169"/>
        <dbReference type="ChEBI" id="CHEBI:16526"/>
        <dbReference type="ChEBI" id="CHEBI:36242"/>
        <dbReference type="EC" id="1.13.11.27"/>
    </reaction>
</comment>
<comment type="cofactor">
    <cofactor evidence="1">
        <name>Fe cation</name>
        <dbReference type="ChEBI" id="CHEBI:24875"/>
    </cofactor>
    <text evidence="1">Binds 1 Fe cation per subunit.</text>
</comment>
<comment type="pathway">
    <text>Amino-acid degradation; L-phenylalanine degradation; acetoacetate and fumarate from L-phenylalanine: step 3/6.</text>
</comment>
<comment type="similarity">
    <text evidence="3">Belongs to the 4HPPD family.</text>
</comment>
<gene>
    <name type="primary">TFA</name>
</gene>
<sequence length="404" mass="46046">MSENKDHVVVGYTEKPVGERPTGGKFLGYDHLHFWVGNAKQAAGWYTSRFGFEYYAYKGLETGSREVATHVVRNKQGVTLAFSTPYGNDKDNQREMNQHQSLHGDGVKDVAFAVEDCHSIYNKAIQRGAKCAYPPQDLKDEHGSVTIAAVHTYGEVIHTFIQRNDYKGFFMPGFVAHPLKDPLNNVLPDISYNYVDHIVGNQPDNMMTSAADWYEKTLDFHRFWSVDDSMIHTEFSSLRSIVMTDYDQKIKMPINEPADGKRKSQIQEYIDFYAGPGVQHIALNTSDVINTVEGLRARGVEFLSIPTSYYDNLRKALTAQTSITVKEDLDVLQKNHILVDYDEKGYLLQIFTKPVEDRPTLFYEIIQRNNHQGFGAGNFKSLFVSLELEQEKRGNLTEIVKNIY</sequence>
<reference key="1">
    <citation type="journal article" date="1992" name="J. Mol. Biol.">
        <title>Tetrahymena gene encodes a protein that is homologous with the liver-specific F-antigen and associated with membranes of the Golgi apparatus and transport vesicles.</title>
        <authorList>
            <person name="Hummel R."/>
            <person name="Noergaard P."/>
            <person name="Andreasen P.H."/>
            <person name="Neve S."/>
            <person name="Skjoedt K."/>
            <person name="Tornehave D."/>
            <person name="Kristiansen K."/>
        </authorList>
    </citation>
    <scope>NUCLEOTIDE SEQUENCE [GENOMIC DNA]</scope>
    <source>
        <strain>B1868</strain>
    </source>
</reference>
<feature type="chain" id="PRO_0000088396" description="4-hydroxyphenylpyruvate dioxygenase">
    <location>
        <begin position="1"/>
        <end position="404"/>
    </location>
</feature>
<feature type="domain" description="VOC 1" evidence="2">
    <location>
        <begin position="28"/>
        <end position="163"/>
    </location>
</feature>
<feature type="domain" description="VOC 2" evidence="2">
    <location>
        <begin position="194"/>
        <end position="353"/>
    </location>
</feature>
<feature type="binding site" evidence="1">
    <location>
        <position position="197"/>
    </location>
    <ligand>
        <name>Fe cation</name>
        <dbReference type="ChEBI" id="CHEBI:24875"/>
    </ligand>
</feature>
<feature type="binding site" evidence="1">
    <location>
        <position position="280"/>
    </location>
    <ligand>
        <name>Fe cation</name>
        <dbReference type="ChEBI" id="CHEBI:24875"/>
    </ligand>
</feature>
<feature type="binding site" evidence="1">
    <location>
        <position position="364"/>
    </location>
    <ligand>
        <name>Fe cation</name>
        <dbReference type="ChEBI" id="CHEBI:24875"/>
    </ligand>
</feature>
<name>HPPD_TETTH</name>
<proteinExistence type="inferred from homology"/>
<accession>Q27203</accession>
<keyword id="KW-0223">Dioxygenase</keyword>
<keyword id="KW-0408">Iron</keyword>
<keyword id="KW-0479">Metal-binding</keyword>
<keyword id="KW-0560">Oxidoreductase</keyword>
<keyword id="KW-0585">Phenylalanine catabolism</keyword>
<keyword id="KW-0677">Repeat</keyword>
<keyword id="KW-0828">Tyrosine catabolism</keyword>
<protein>
    <recommendedName>
        <fullName>4-hydroxyphenylpyruvate dioxygenase</fullName>
        <ecNumber>1.13.11.27</ecNumber>
    </recommendedName>
    <alternativeName>
        <fullName>4-hydroxyphenylpyruvic acid oxidase</fullName>
        <shortName>4HPPD</shortName>
        <shortName>HPD</shortName>
        <shortName>HPPDase</shortName>
    </alternativeName>
    <alternativeName>
        <fullName>F-antigen homolog</fullName>
    </alternativeName>
    <alternativeName>
        <fullName>TF-AG</fullName>
    </alternativeName>
</protein>